<feature type="chain" id="PRO_0000407896" description="Ribonuclease VapC44">
    <location>
        <begin position="1"/>
        <end position="142"/>
    </location>
</feature>
<feature type="domain" description="PINc" evidence="1">
    <location>
        <begin position="4"/>
        <end position="126"/>
    </location>
</feature>
<feature type="binding site" evidence="1">
    <location>
        <position position="6"/>
    </location>
    <ligand>
        <name>Mg(2+)</name>
        <dbReference type="ChEBI" id="CHEBI:18420"/>
    </ligand>
</feature>
<feature type="binding site" evidence="1">
    <location>
        <position position="105"/>
    </location>
    <ligand>
        <name>Mg(2+)</name>
        <dbReference type="ChEBI" id="CHEBI:18420"/>
    </ligand>
</feature>
<organism>
    <name type="scientific">Mycobacterium tuberculosis (strain ATCC 25618 / H37Rv)</name>
    <dbReference type="NCBI Taxonomy" id="83332"/>
    <lineage>
        <taxon>Bacteria</taxon>
        <taxon>Bacillati</taxon>
        <taxon>Actinomycetota</taxon>
        <taxon>Actinomycetes</taxon>
        <taxon>Mycobacteriales</taxon>
        <taxon>Mycobacteriaceae</taxon>
        <taxon>Mycobacterium</taxon>
        <taxon>Mycobacterium tuberculosis complex</taxon>
    </lineage>
</organism>
<evidence type="ECO:0000255" key="1">
    <source>
        <dbReference type="HAMAP-Rule" id="MF_00265"/>
    </source>
</evidence>
<evidence type="ECO:0000269" key="2">
    <source>
    </source>
</evidence>
<accession>P9WF53</accession>
<accession>L0TEZ7</accession>
<accession>O53372</accession>
<accession>Q7D5Q0</accession>
<protein>
    <recommendedName>
        <fullName evidence="1">Ribonuclease VapC44</fullName>
        <shortName evidence="1">RNase VapC44</shortName>
        <ecNumber evidence="1">3.1.-.-</ecNumber>
    </recommendedName>
    <alternativeName>
        <fullName evidence="1">Toxin VapC44</fullName>
    </alternativeName>
</protein>
<keyword id="KW-0378">Hydrolase</keyword>
<keyword id="KW-0460">Magnesium</keyword>
<keyword id="KW-0479">Metal-binding</keyword>
<keyword id="KW-0540">Nuclease</keyword>
<keyword id="KW-1185">Reference proteome</keyword>
<keyword id="KW-0964">Secreted</keyword>
<keyword id="KW-1277">Toxin-antitoxin system</keyword>
<name>VPC44_MYCTU</name>
<comment type="function">
    <text evidence="1">Toxic component of a type II toxin-antitoxin (TA) system. An RNase. Its cognate antitoxin is VapB44 (By similarity).</text>
</comment>
<comment type="cofactor">
    <cofactor evidence="1">
        <name>Mg(2+)</name>
        <dbReference type="ChEBI" id="CHEBI:18420"/>
    </cofactor>
</comment>
<comment type="subcellular location">
    <subcellularLocation>
        <location>Secreted</location>
    </subcellularLocation>
    <text evidence="2">Following 6 weeks of nutrient starvation.</text>
</comment>
<comment type="similarity">
    <text evidence="1">Belongs to the PINc/VapC protein family.</text>
</comment>
<dbReference type="EC" id="3.1.-.-" evidence="1"/>
<dbReference type="EMBL" id="AL123456">
    <property type="protein sequence ID" value="CCP46140.1"/>
    <property type="molecule type" value="Genomic_DNA"/>
</dbReference>
<dbReference type="PIR" id="G70843">
    <property type="entry name" value="G70843"/>
</dbReference>
<dbReference type="RefSeq" id="NP_217837.1">
    <property type="nucleotide sequence ID" value="NC_000962.3"/>
</dbReference>
<dbReference type="RefSeq" id="WP_003417282.1">
    <property type="nucleotide sequence ID" value="NZ_NVQJ01000003.1"/>
</dbReference>
<dbReference type="SMR" id="P9WF53"/>
<dbReference type="STRING" id="83332.Rv3320c"/>
<dbReference type="PaxDb" id="83332-Rv3320c"/>
<dbReference type="DNASU" id="887245"/>
<dbReference type="GeneID" id="887245"/>
<dbReference type="KEGG" id="mtu:Rv3320c"/>
<dbReference type="KEGG" id="mtv:RVBD_3320c"/>
<dbReference type="TubercuList" id="Rv3320c"/>
<dbReference type="eggNOG" id="COG1848">
    <property type="taxonomic scope" value="Bacteria"/>
</dbReference>
<dbReference type="InParanoid" id="P9WF53"/>
<dbReference type="OrthoDB" id="196567at2"/>
<dbReference type="PhylomeDB" id="P9WF53"/>
<dbReference type="Proteomes" id="UP000001584">
    <property type="component" value="Chromosome"/>
</dbReference>
<dbReference type="GO" id="GO:0005576">
    <property type="term" value="C:extracellular region"/>
    <property type="evidence" value="ECO:0007669"/>
    <property type="project" value="UniProtKB-SubCell"/>
</dbReference>
<dbReference type="GO" id="GO:0000287">
    <property type="term" value="F:magnesium ion binding"/>
    <property type="evidence" value="ECO:0007669"/>
    <property type="project" value="UniProtKB-UniRule"/>
</dbReference>
<dbReference type="GO" id="GO:0004540">
    <property type="term" value="F:RNA nuclease activity"/>
    <property type="evidence" value="ECO:0007669"/>
    <property type="project" value="InterPro"/>
</dbReference>
<dbReference type="GO" id="GO:0045926">
    <property type="term" value="P:negative regulation of growth"/>
    <property type="evidence" value="ECO:0007669"/>
    <property type="project" value="UniProtKB-ARBA"/>
</dbReference>
<dbReference type="Gene3D" id="3.40.50.1010">
    <property type="entry name" value="5'-nuclease"/>
    <property type="match status" value="1"/>
</dbReference>
<dbReference type="HAMAP" id="MF_00265">
    <property type="entry name" value="VapC_Nob1"/>
    <property type="match status" value="1"/>
</dbReference>
<dbReference type="InterPro" id="IPR006226">
    <property type="entry name" value="Mtu_PIN"/>
</dbReference>
<dbReference type="InterPro" id="IPR029060">
    <property type="entry name" value="PIN-like_dom_sf"/>
</dbReference>
<dbReference type="InterPro" id="IPR002716">
    <property type="entry name" value="PIN_dom"/>
</dbReference>
<dbReference type="InterPro" id="IPR022907">
    <property type="entry name" value="VapC_family"/>
</dbReference>
<dbReference type="NCBIfam" id="TIGR00028">
    <property type="entry name" value="Mtu_PIN_fam"/>
    <property type="match status" value="1"/>
</dbReference>
<dbReference type="Pfam" id="PF01850">
    <property type="entry name" value="PIN"/>
    <property type="match status" value="1"/>
</dbReference>
<dbReference type="SUPFAM" id="SSF88723">
    <property type="entry name" value="PIN domain-like"/>
    <property type="match status" value="1"/>
</dbReference>
<reference key="1">
    <citation type="journal article" date="1998" name="Nature">
        <title>Deciphering the biology of Mycobacterium tuberculosis from the complete genome sequence.</title>
        <authorList>
            <person name="Cole S.T."/>
            <person name="Brosch R."/>
            <person name="Parkhill J."/>
            <person name="Garnier T."/>
            <person name="Churcher C.M."/>
            <person name="Harris D.E."/>
            <person name="Gordon S.V."/>
            <person name="Eiglmeier K."/>
            <person name="Gas S."/>
            <person name="Barry C.E. III"/>
            <person name="Tekaia F."/>
            <person name="Badcock K."/>
            <person name="Basham D."/>
            <person name="Brown D."/>
            <person name="Chillingworth T."/>
            <person name="Connor R."/>
            <person name="Davies R.M."/>
            <person name="Devlin K."/>
            <person name="Feltwell T."/>
            <person name="Gentles S."/>
            <person name="Hamlin N."/>
            <person name="Holroyd S."/>
            <person name="Hornsby T."/>
            <person name="Jagels K."/>
            <person name="Krogh A."/>
            <person name="McLean J."/>
            <person name="Moule S."/>
            <person name="Murphy L.D."/>
            <person name="Oliver S."/>
            <person name="Osborne J."/>
            <person name="Quail M.A."/>
            <person name="Rajandream M.A."/>
            <person name="Rogers J."/>
            <person name="Rutter S."/>
            <person name="Seeger K."/>
            <person name="Skelton S."/>
            <person name="Squares S."/>
            <person name="Squares R."/>
            <person name="Sulston J.E."/>
            <person name="Taylor K."/>
            <person name="Whitehead S."/>
            <person name="Barrell B.G."/>
        </authorList>
    </citation>
    <scope>NUCLEOTIDE SEQUENCE [LARGE SCALE GENOMIC DNA]</scope>
    <source>
        <strain>ATCC 25618 / H37Rv</strain>
    </source>
</reference>
<reference key="2">
    <citation type="journal article" date="2009" name="PLoS Genet.">
        <title>Comprehensive functional analysis of Mycobacterium tuberculosis toxin-antitoxin systems: implications for pathogenesis, stress responses, and evolution.</title>
        <authorList>
            <person name="Ramage H.R."/>
            <person name="Connolly L.E."/>
            <person name="Cox J.S."/>
        </authorList>
    </citation>
    <scope>POSSIBLE FUNCTION</scope>
    <source>
        <strain>ATCC 35801 / TMC 107 / Erdman</strain>
    </source>
</reference>
<reference key="3">
    <citation type="journal article" date="2011" name="Mol. Cell. Proteomics">
        <title>Proteogenomic analysis of Mycobacterium tuberculosis by high resolution mass spectrometry.</title>
        <authorList>
            <person name="Kelkar D.S."/>
            <person name="Kumar D."/>
            <person name="Kumar P."/>
            <person name="Balakrishnan L."/>
            <person name="Muthusamy B."/>
            <person name="Yadav A.K."/>
            <person name="Shrivastava P."/>
            <person name="Marimuthu A."/>
            <person name="Anand S."/>
            <person name="Sundaram H."/>
            <person name="Kingsbury R."/>
            <person name="Harsha H.C."/>
            <person name="Nair B."/>
            <person name="Prasad T.S."/>
            <person name="Chauhan D.S."/>
            <person name="Katoch K."/>
            <person name="Katoch V.M."/>
            <person name="Kumar P."/>
            <person name="Chaerkady R."/>
            <person name="Ramachandran S."/>
            <person name="Dash D."/>
            <person name="Pandey A."/>
        </authorList>
    </citation>
    <scope>IDENTIFICATION BY MASS SPECTROMETRY [LARGE SCALE ANALYSIS]</scope>
    <source>
        <strain>ATCC 25618 / H37Rv</strain>
    </source>
</reference>
<reference key="4">
    <citation type="journal article" date="2013" name="Mol. Cell. Proteomics">
        <title>Proteomic profiling of Mycobacterium tuberculosis identifies nutrient-starvation-responsive toxin-antitoxin systems.</title>
        <authorList>
            <person name="Albrethsen J."/>
            <person name="Agner J."/>
            <person name="Piersma S.R."/>
            <person name="Hoejrup P."/>
            <person name="Pham T.V."/>
            <person name="Weldingh K."/>
            <person name="Jimenez C.R."/>
            <person name="Andersen P."/>
            <person name="Rosenkrands I."/>
        </authorList>
    </citation>
    <scope>IDENTIFICATION BY MASS SPECTROMETRY</scope>
    <scope>SUBCELLULAR LOCATION</scope>
    <source>
        <strain>ATCC 27294 / TMC 102 / H37Rv</strain>
    </source>
</reference>
<proteinExistence type="evidence at protein level"/>
<gene>
    <name evidence="1" type="primary">vapC44</name>
    <name type="ordered locus">Rv3320c</name>
</gene>
<sequence>MRALLDVNVLLALLDRDHVDHERARAWITGQIERGWASCAITQNGFVRVISQPRYPSPISVAHAIDLLARATHTRYHEFWSCTVSILDSKVIDRSRLHSPKQVTDAYLLALAVAHDGRFVTFDQSIALTAVPGATKQHLATL</sequence>